<name>RHAB_KLEP3</name>
<reference key="1">
    <citation type="journal article" date="2008" name="PLoS Genet.">
        <title>Complete genome sequence of the N2-fixing broad host range endophyte Klebsiella pneumoniae 342 and virulence predictions verified in mice.</title>
        <authorList>
            <person name="Fouts D.E."/>
            <person name="Tyler H.L."/>
            <person name="DeBoy R.T."/>
            <person name="Daugherty S."/>
            <person name="Ren Q."/>
            <person name="Badger J.H."/>
            <person name="Durkin A.S."/>
            <person name="Huot H."/>
            <person name="Shrivastava S."/>
            <person name="Kothari S."/>
            <person name="Dodson R.J."/>
            <person name="Mohamoud Y."/>
            <person name="Khouri H."/>
            <person name="Roesch L.F.W."/>
            <person name="Krogfelt K.A."/>
            <person name="Struve C."/>
            <person name="Triplett E.W."/>
            <person name="Methe B.A."/>
        </authorList>
    </citation>
    <scope>NUCLEOTIDE SEQUENCE [LARGE SCALE GENOMIC DNA]</scope>
    <source>
        <strain>342</strain>
    </source>
</reference>
<organism>
    <name type="scientific">Klebsiella pneumoniae (strain 342)</name>
    <dbReference type="NCBI Taxonomy" id="507522"/>
    <lineage>
        <taxon>Bacteria</taxon>
        <taxon>Pseudomonadati</taxon>
        <taxon>Pseudomonadota</taxon>
        <taxon>Gammaproteobacteria</taxon>
        <taxon>Enterobacterales</taxon>
        <taxon>Enterobacteriaceae</taxon>
        <taxon>Klebsiella/Raoultella group</taxon>
        <taxon>Klebsiella</taxon>
        <taxon>Klebsiella pneumoniae complex</taxon>
    </lineage>
</organism>
<protein>
    <recommendedName>
        <fullName evidence="1">Rhamnulokinase</fullName>
        <shortName evidence="1">RhaB</shortName>
        <ecNumber evidence="1">2.7.1.5</ecNumber>
    </recommendedName>
    <alternativeName>
        <fullName evidence="1">ATP:L-rhamnulose phosphotransferase</fullName>
    </alternativeName>
    <alternativeName>
        <fullName evidence="1">L-rhamnulose 1-kinase</fullName>
    </alternativeName>
    <alternativeName>
        <fullName evidence="1">Rhamnulose kinase</fullName>
    </alternativeName>
</protein>
<keyword id="KW-0067">ATP-binding</keyword>
<keyword id="KW-1015">Disulfide bond</keyword>
<keyword id="KW-0418">Kinase</keyword>
<keyword id="KW-0460">Magnesium</keyword>
<keyword id="KW-0547">Nucleotide-binding</keyword>
<keyword id="KW-0684">Rhamnose metabolism</keyword>
<keyword id="KW-0808">Transferase</keyword>
<dbReference type="EC" id="2.7.1.5" evidence="1"/>
<dbReference type="EMBL" id="CP000964">
    <property type="protein sequence ID" value="ACI09151.1"/>
    <property type="molecule type" value="Genomic_DNA"/>
</dbReference>
<dbReference type="SMR" id="B5XZ51"/>
<dbReference type="KEGG" id="kpe:KPK_5467"/>
<dbReference type="HOGENOM" id="CLU_039395_0_0_6"/>
<dbReference type="UniPathway" id="UPA00541">
    <property type="reaction ID" value="UER00602"/>
</dbReference>
<dbReference type="Proteomes" id="UP000001734">
    <property type="component" value="Chromosome"/>
</dbReference>
<dbReference type="GO" id="GO:0005829">
    <property type="term" value="C:cytosol"/>
    <property type="evidence" value="ECO:0007669"/>
    <property type="project" value="TreeGrafter"/>
</dbReference>
<dbReference type="GO" id="GO:0005524">
    <property type="term" value="F:ATP binding"/>
    <property type="evidence" value="ECO:0007669"/>
    <property type="project" value="UniProtKB-KW"/>
</dbReference>
<dbReference type="GO" id="GO:0004370">
    <property type="term" value="F:glycerol kinase activity"/>
    <property type="evidence" value="ECO:0007669"/>
    <property type="project" value="TreeGrafter"/>
</dbReference>
<dbReference type="GO" id="GO:0008993">
    <property type="term" value="F:rhamnulokinase activity"/>
    <property type="evidence" value="ECO:0007669"/>
    <property type="project" value="UniProtKB-UniRule"/>
</dbReference>
<dbReference type="GO" id="GO:0006071">
    <property type="term" value="P:glycerol metabolic process"/>
    <property type="evidence" value="ECO:0007669"/>
    <property type="project" value="TreeGrafter"/>
</dbReference>
<dbReference type="GO" id="GO:0019301">
    <property type="term" value="P:rhamnose catabolic process"/>
    <property type="evidence" value="ECO:0007669"/>
    <property type="project" value="UniProtKB-UniRule"/>
</dbReference>
<dbReference type="CDD" id="cd07771">
    <property type="entry name" value="ASKHA_NBD_FGGY_RhaB-like"/>
    <property type="match status" value="1"/>
</dbReference>
<dbReference type="FunFam" id="3.30.420.40:FF:000064">
    <property type="entry name" value="Rhamnulokinase"/>
    <property type="match status" value="1"/>
</dbReference>
<dbReference type="FunFam" id="3.30.420.40:FF:000073">
    <property type="entry name" value="Rhamnulokinase"/>
    <property type="match status" value="1"/>
</dbReference>
<dbReference type="Gene3D" id="3.30.420.40">
    <property type="match status" value="2"/>
</dbReference>
<dbReference type="HAMAP" id="MF_01535">
    <property type="entry name" value="Rhamnulokinase"/>
    <property type="match status" value="1"/>
</dbReference>
<dbReference type="InterPro" id="IPR043129">
    <property type="entry name" value="ATPase_NBD"/>
</dbReference>
<dbReference type="InterPro" id="IPR018485">
    <property type="entry name" value="FGGY_C"/>
</dbReference>
<dbReference type="InterPro" id="IPR018484">
    <property type="entry name" value="FGGY_N"/>
</dbReference>
<dbReference type="InterPro" id="IPR013449">
    <property type="entry name" value="Rhamnulokinase"/>
</dbReference>
<dbReference type="NCBIfam" id="NF007925">
    <property type="entry name" value="PRK10640.1"/>
    <property type="match status" value="1"/>
</dbReference>
<dbReference type="NCBIfam" id="TIGR02627">
    <property type="entry name" value="rhamnulo_kin"/>
    <property type="match status" value="1"/>
</dbReference>
<dbReference type="PANTHER" id="PTHR10196:SF93">
    <property type="entry name" value="L-RHAMNULOKINASE"/>
    <property type="match status" value="1"/>
</dbReference>
<dbReference type="PANTHER" id="PTHR10196">
    <property type="entry name" value="SUGAR KINASE"/>
    <property type="match status" value="1"/>
</dbReference>
<dbReference type="Pfam" id="PF02782">
    <property type="entry name" value="FGGY_C"/>
    <property type="match status" value="1"/>
</dbReference>
<dbReference type="Pfam" id="PF00370">
    <property type="entry name" value="FGGY_N"/>
    <property type="match status" value="1"/>
</dbReference>
<dbReference type="SUPFAM" id="SSF53067">
    <property type="entry name" value="Actin-like ATPase domain"/>
    <property type="match status" value="2"/>
</dbReference>
<feature type="chain" id="PRO_1000146547" description="Rhamnulokinase">
    <location>
        <begin position="1"/>
        <end position="488"/>
    </location>
</feature>
<feature type="active site" description="Proton acceptor" evidence="1">
    <location>
        <position position="237"/>
    </location>
</feature>
<feature type="binding site" evidence="1">
    <location>
        <begin position="13"/>
        <end position="17"/>
    </location>
    <ligand>
        <name>ATP</name>
        <dbReference type="ChEBI" id="CHEBI:30616"/>
    </ligand>
</feature>
<feature type="binding site" evidence="1">
    <location>
        <position position="83"/>
    </location>
    <ligand>
        <name>substrate</name>
    </ligand>
</feature>
<feature type="binding site" evidence="1">
    <location>
        <begin position="236"/>
        <end position="238"/>
    </location>
    <ligand>
        <name>substrate</name>
    </ligand>
</feature>
<feature type="binding site" evidence="1">
    <location>
        <position position="259"/>
    </location>
    <ligand>
        <name>ATP</name>
        <dbReference type="ChEBI" id="CHEBI:30616"/>
    </ligand>
</feature>
<feature type="binding site" evidence="1">
    <location>
        <position position="296"/>
    </location>
    <ligand>
        <name>substrate</name>
    </ligand>
</feature>
<feature type="binding site" evidence="1">
    <location>
        <position position="304"/>
    </location>
    <ligand>
        <name>ATP</name>
        <dbReference type="ChEBI" id="CHEBI:30616"/>
    </ligand>
</feature>
<feature type="binding site" evidence="1">
    <location>
        <position position="402"/>
    </location>
    <ligand>
        <name>ATP</name>
        <dbReference type="ChEBI" id="CHEBI:30616"/>
    </ligand>
</feature>
<feature type="disulfide bond" evidence="1">
    <location>
        <begin position="68"/>
        <end position="222"/>
    </location>
</feature>
<feature type="disulfide bond" evidence="1">
    <location>
        <begin position="353"/>
        <end position="370"/>
    </location>
</feature>
<feature type="disulfide bond" evidence="1">
    <location>
        <begin position="413"/>
        <end position="417"/>
    </location>
</feature>
<accession>B5XZ51</accession>
<comment type="function">
    <text evidence="1">Involved in the catabolism of L-rhamnose (6-deoxy-L-mannose). Catalyzes the transfer of the gamma-phosphate group from ATP to the 1-hydroxyl group of L-rhamnulose to yield L-rhamnulose 1-phosphate.</text>
</comment>
<comment type="catalytic activity">
    <reaction evidence="1">
        <text>L-rhamnulose + ATP = L-rhamnulose 1-phosphate + ADP + H(+)</text>
        <dbReference type="Rhea" id="RHEA:20117"/>
        <dbReference type="ChEBI" id="CHEBI:15378"/>
        <dbReference type="ChEBI" id="CHEBI:17897"/>
        <dbReference type="ChEBI" id="CHEBI:30616"/>
        <dbReference type="ChEBI" id="CHEBI:58313"/>
        <dbReference type="ChEBI" id="CHEBI:456216"/>
        <dbReference type="EC" id="2.7.1.5"/>
    </reaction>
</comment>
<comment type="cofactor">
    <cofactor evidence="1">
        <name>Mg(2+)</name>
        <dbReference type="ChEBI" id="CHEBI:18420"/>
    </cofactor>
</comment>
<comment type="pathway">
    <text evidence="1">Carbohydrate degradation; L-rhamnose degradation; glycerone phosphate from L-rhamnose: step 2/3.</text>
</comment>
<comment type="similarity">
    <text evidence="1">Belongs to the rhamnulokinase family.</text>
</comment>
<proteinExistence type="inferred from homology"/>
<evidence type="ECO:0000255" key="1">
    <source>
        <dbReference type="HAMAP-Rule" id="MF_01535"/>
    </source>
</evidence>
<sequence>MSIRHCVAVDLGASSGRVMLASYQSGPRALTLREIHRFTNSLQKVDGFDCWDVDSLEGEIRRGLEKVCEQGILIDSIGIDTWGVDYVLLDKQGQRVGLPISYRDDRTQGLLRHAEEQLGRAEIYRRSGIQFLPFNTLYQLRALVEQQPELVSQAAHALLIPDYFSFRLTGNLNWEYTNATTTQLVNINSDSWDETLLNWTGAPLAWFGTPTHPGNVIGHWICPQGNRIPVVAVASHDTASAVIASPLADRHAAYLSSGTWSLMGFESLTPYTCDAALQANITNEGGAEGRYRVLKNIMGLWLLQRVLKEQHVSDLQGLIARTAALPACRFMIDCNDDRFINPASMSAEIQAACRDAGQPVPESDAELARCIFDSLALLYARVLNELAALRGQPFSQLHIVGGGCQNALLNQLCADACGIAVVAGPIEASTLGNIGIQLMTLDELANVDEFRQVVRDNAALTAFTPNPDSEIARFVAQFQPQQTKELCA</sequence>
<gene>
    <name evidence="1" type="primary">rhaB</name>
    <name type="ordered locus">KPK_5467</name>
</gene>